<evidence type="ECO:0000255" key="1">
    <source>
        <dbReference type="HAMAP-Rule" id="MF_00265"/>
    </source>
</evidence>
<sequence>MYKIVPDTNFLIYVFKHKINFDYEIERALNTKFEIVILSPIKEELERLLKSRDLKGKEKLAVNLALAKIKNYKLVDYTANYADEAILNYAKENENVIVATNDKELKEKLMENNIPVMVVRQKKYFEIFGMV</sequence>
<comment type="function">
    <text evidence="1">Toxic component of a type II toxin-antitoxin (TA) system. An RNase. Its cognate antitoxin is VapB4 (By similarity).</text>
</comment>
<comment type="cofactor">
    <cofactor evidence="1">
        <name>Mg(2+)</name>
        <dbReference type="ChEBI" id="CHEBI:18420"/>
    </cofactor>
</comment>
<comment type="similarity">
    <text evidence="1">Belongs to the PINc/VapC protein family.</text>
</comment>
<keyword id="KW-0378">Hydrolase</keyword>
<keyword id="KW-0460">Magnesium</keyword>
<keyword id="KW-0479">Metal-binding</keyword>
<keyword id="KW-0540">Nuclease</keyword>
<keyword id="KW-1185">Reference proteome</keyword>
<keyword id="KW-1277">Toxin-antitoxin system</keyword>
<protein>
    <recommendedName>
        <fullName evidence="1">Ribonuclease VapC4</fullName>
        <shortName evidence="1">RNase VapC4</shortName>
        <ecNumber evidence="1">3.1.-.-</ecNumber>
    </recommendedName>
    <alternativeName>
        <fullName evidence="1">Putative toxin VapC4</fullName>
    </alternativeName>
</protein>
<accession>Q58716</accession>
<gene>
    <name evidence="1" type="primary">vapC4</name>
    <name type="ordered locus">MJ1320</name>
</gene>
<dbReference type="EC" id="3.1.-.-" evidence="1"/>
<dbReference type="EMBL" id="L77117">
    <property type="protein sequence ID" value="AAB99330.1"/>
    <property type="molecule type" value="Genomic_DNA"/>
</dbReference>
<dbReference type="PIR" id="G64464">
    <property type="entry name" value="G64464"/>
</dbReference>
<dbReference type="RefSeq" id="WP_010870837.1">
    <property type="nucleotide sequence ID" value="NC_000909.1"/>
</dbReference>
<dbReference type="SMR" id="Q58716"/>
<dbReference type="FunCoup" id="Q58716">
    <property type="interactions" value="168"/>
</dbReference>
<dbReference type="STRING" id="243232.MJ_1320"/>
<dbReference type="PaxDb" id="243232-MJ_1320"/>
<dbReference type="EnsemblBacteria" id="AAB99330">
    <property type="protein sequence ID" value="AAB99330"/>
    <property type="gene ID" value="MJ_1320"/>
</dbReference>
<dbReference type="GeneID" id="1452222"/>
<dbReference type="KEGG" id="mja:MJ_1320"/>
<dbReference type="eggNOG" id="arCOG04312">
    <property type="taxonomic scope" value="Archaea"/>
</dbReference>
<dbReference type="HOGENOM" id="CLU_107892_1_0_2"/>
<dbReference type="InParanoid" id="Q58716"/>
<dbReference type="OrthoDB" id="15280at2157"/>
<dbReference type="PhylomeDB" id="Q58716"/>
<dbReference type="Proteomes" id="UP000000805">
    <property type="component" value="Chromosome"/>
</dbReference>
<dbReference type="GO" id="GO:0000287">
    <property type="term" value="F:magnesium ion binding"/>
    <property type="evidence" value="ECO:0007669"/>
    <property type="project" value="UniProtKB-UniRule"/>
</dbReference>
<dbReference type="GO" id="GO:0004540">
    <property type="term" value="F:RNA nuclease activity"/>
    <property type="evidence" value="ECO:0007669"/>
    <property type="project" value="InterPro"/>
</dbReference>
<dbReference type="CDD" id="cd09879">
    <property type="entry name" value="PIN_VapC_AF0591-like"/>
    <property type="match status" value="1"/>
</dbReference>
<dbReference type="Gene3D" id="3.40.50.1010">
    <property type="entry name" value="5'-nuclease"/>
    <property type="match status" value="1"/>
</dbReference>
<dbReference type="HAMAP" id="MF_00265">
    <property type="entry name" value="VapC_Nob1"/>
    <property type="match status" value="1"/>
</dbReference>
<dbReference type="InterPro" id="IPR029060">
    <property type="entry name" value="PIN-like_dom_sf"/>
</dbReference>
<dbReference type="InterPro" id="IPR041120">
    <property type="entry name" value="PIN_9"/>
</dbReference>
<dbReference type="InterPro" id="IPR002716">
    <property type="entry name" value="PIN_dom"/>
</dbReference>
<dbReference type="InterPro" id="IPR022907">
    <property type="entry name" value="VapC_family"/>
</dbReference>
<dbReference type="PANTHER" id="PTHR12416">
    <property type="entry name" value="RRNA-PROCESSING PROTEIN UTP23 HOMOLOG"/>
    <property type="match status" value="1"/>
</dbReference>
<dbReference type="Pfam" id="PF18477">
    <property type="entry name" value="PIN_9"/>
    <property type="match status" value="1"/>
</dbReference>
<dbReference type="SMART" id="SM00670">
    <property type="entry name" value="PINc"/>
    <property type="match status" value="1"/>
</dbReference>
<dbReference type="SUPFAM" id="SSF88723">
    <property type="entry name" value="PIN domain-like"/>
    <property type="match status" value="1"/>
</dbReference>
<feature type="chain" id="PRO_0000107274" description="Ribonuclease VapC4">
    <location>
        <begin position="1"/>
        <end position="131"/>
    </location>
</feature>
<feature type="domain" description="PINc" evidence="1">
    <location>
        <begin position="4"/>
        <end position="106"/>
    </location>
</feature>
<feature type="binding site" evidence="1">
    <location>
        <position position="7"/>
    </location>
    <ligand>
        <name>Mg(2+)</name>
        <dbReference type="ChEBI" id="CHEBI:18420"/>
    </ligand>
</feature>
<feature type="binding site" evidence="1">
    <location>
        <position position="102"/>
    </location>
    <ligand>
        <name>Mg(2+)</name>
        <dbReference type="ChEBI" id="CHEBI:18420"/>
    </ligand>
</feature>
<reference key="1">
    <citation type="journal article" date="1996" name="Science">
        <title>Complete genome sequence of the methanogenic archaeon, Methanococcus jannaschii.</title>
        <authorList>
            <person name="Bult C.J."/>
            <person name="White O."/>
            <person name="Olsen G.J."/>
            <person name="Zhou L."/>
            <person name="Fleischmann R.D."/>
            <person name="Sutton G.G."/>
            <person name="Blake J.A."/>
            <person name="FitzGerald L.M."/>
            <person name="Clayton R.A."/>
            <person name="Gocayne J.D."/>
            <person name="Kerlavage A.R."/>
            <person name="Dougherty B.A."/>
            <person name="Tomb J.-F."/>
            <person name="Adams M.D."/>
            <person name="Reich C.I."/>
            <person name="Overbeek R."/>
            <person name="Kirkness E.F."/>
            <person name="Weinstock K.G."/>
            <person name="Merrick J.M."/>
            <person name="Glodek A."/>
            <person name="Scott J.L."/>
            <person name="Geoghagen N.S.M."/>
            <person name="Weidman J.F."/>
            <person name="Fuhrmann J.L."/>
            <person name="Nguyen D."/>
            <person name="Utterback T.R."/>
            <person name="Kelley J.M."/>
            <person name="Peterson J.D."/>
            <person name="Sadow P.W."/>
            <person name="Hanna M.C."/>
            <person name="Cotton M.D."/>
            <person name="Roberts K.M."/>
            <person name="Hurst M.A."/>
            <person name="Kaine B.P."/>
            <person name="Borodovsky M."/>
            <person name="Klenk H.-P."/>
            <person name="Fraser C.M."/>
            <person name="Smith H.O."/>
            <person name="Woese C.R."/>
            <person name="Venter J.C."/>
        </authorList>
    </citation>
    <scope>NUCLEOTIDE SEQUENCE [LARGE SCALE GENOMIC DNA]</scope>
    <source>
        <strain>ATCC 43067 / DSM 2661 / JAL-1 / JCM 10045 / NBRC 100440</strain>
    </source>
</reference>
<reference key="2">
    <citation type="journal article" date="2005" name="Nucleic Acids Res.">
        <title>Toxin-antitoxin loci are highly abundant in free-living but lost from host-associated prokaryotes.</title>
        <authorList>
            <person name="Pandey D.P."/>
            <person name="Gerdes K."/>
        </authorList>
    </citation>
    <scope>POSSIBLE FUNCTION</scope>
    <source>
        <strain>ATCC 43067 / DSM 2661 / JAL-1 / JCM 10045 / NBRC 100440</strain>
    </source>
</reference>
<name>VAPC4_METJA</name>
<organism>
    <name type="scientific">Methanocaldococcus jannaschii (strain ATCC 43067 / DSM 2661 / JAL-1 / JCM 10045 / NBRC 100440)</name>
    <name type="common">Methanococcus jannaschii</name>
    <dbReference type="NCBI Taxonomy" id="243232"/>
    <lineage>
        <taxon>Archaea</taxon>
        <taxon>Methanobacteriati</taxon>
        <taxon>Methanobacteriota</taxon>
        <taxon>Methanomada group</taxon>
        <taxon>Methanococci</taxon>
        <taxon>Methanococcales</taxon>
        <taxon>Methanocaldococcaceae</taxon>
        <taxon>Methanocaldococcus</taxon>
    </lineage>
</organism>
<proteinExistence type="inferred from homology"/>